<protein>
    <recommendedName>
        <fullName>Cellular tumor antigen p53</fullName>
    </recommendedName>
    <alternativeName>
        <fullName>Tumor suppressor p53</fullName>
    </alternativeName>
</protein>
<accession>Q95330</accession>
<reference key="1">
    <citation type="journal article" date="1997" name="Gene">
        <title>cDNA cloning and immunological characterization of rabbit p53.</title>
        <authorList>
            <person name="le Goas F."/>
            <person name="May P."/>
            <person name="Ronco P."/>
            <person name="Caron de Fromentel C."/>
        </authorList>
    </citation>
    <scope>NUCLEOTIDE SEQUENCE [MRNA]</scope>
    <source>
        <strain>New Zealand</strain>
    </source>
</reference>
<dbReference type="EMBL" id="X90592">
    <property type="protein sequence ID" value="CAA62216.1"/>
    <property type="molecule type" value="mRNA"/>
</dbReference>
<dbReference type="PIR" id="JC6193">
    <property type="entry name" value="JC6193"/>
</dbReference>
<dbReference type="RefSeq" id="NP_001075873.1">
    <property type="nucleotide sequence ID" value="NM_001082404.1"/>
</dbReference>
<dbReference type="SMR" id="Q95330"/>
<dbReference type="FunCoup" id="Q95330">
    <property type="interactions" value="1368"/>
</dbReference>
<dbReference type="STRING" id="9986.ENSOCUP00000000989"/>
<dbReference type="PaxDb" id="9986-ENSOCUP00000000989"/>
<dbReference type="GeneID" id="100009292"/>
<dbReference type="KEGG" id="ocu:100009292"/>
<dbReference type="CTD" id="7157"/>
<dbReference type="eggNOG" id="ENOG502QVY3">
    <property type="taxonomic scope" value="Eukaryota"/>
</dbReference>
<dbReference type="InParanoid" id="Q95330"/>
<dbReference type="OrthoDB" id="5915660at2759"/>
<dbReference type="Proteomes" id="UP000001811">
    <property type="component" value="Unplaced"/>
</dbReference>
<dbReference type="GO" id="GO:0005813">
    <property type="term" value="C:centrosome"/>
    <property type="evidence" value="ECO:0000250"/>
    <property type="project" value="UniProtKB"/>
</dbReference>
<dbReference type="GO" id="GO:0005737">
    <property type="term" value="C:cytoplasm"/>
    <property type="evidence" value="ECO:0000250"/>
    <property type="project" value="UniProtKB"/>
</dbReference>
<dbReference type="GO" id="GO:0005783">
    <property type="term" value="C:endoplasmic reticulum"/>
    <property type="evidence" value="ECO:0007669"/>
    <property type="project" value="UniProtKB-SubCell"/>
</dbReference>
<dbReference type="GO" id="GO:0005759">
    <property type="term" value="C:mitochondrial matrix"/>
    <property type="evidence" value="ECO:0007669"/>
    <property type="project" value="UniProtKB-SubCell"/>
</dbReference>
<dbReference type="GO" id="GO:0005739">
    <property type="term" value="C:mitochondrion"/>
    <property type="evidence" value="ECO:0000250"/>
    <property type="project" value="UniProtKB"/>
</dbReference>
<dbReference type="GO" id="GO:0005730">
    <property type="term" value="C:nucleolus"/>
    <property type="evidence" value="ECO:0000250"/>
    <property type="project" value="UniProtKB"/>
</dbReference>
<dbReference type="GO" id="GO:0005634">
    <property type="term" value="C:nucleus"/>
    <property type="evidence" value="ECO:0000250"/>
    <property type="project" value="UniProtKB"/>
</dbReference>
<dbReference type="GO" id="GO:0016605">
    <property type="term" value="C:PML body"/>
    <property type="evidence" value="ECO:0007669"/>
    <property type="project" value="UniProtKB-SubCell"/>
</dbReference>
<dbReference type="GO" id="GO:0036310">
    <property type="term" value="F:ATP-dependent DNA/DNA annealing activity"/>
    <property type="evidence" value="ECO:0000250"/>
    <property type="project" value="UniProtKB"/>
</dbReference>
<dbReference type="GO" id="GO:0005507">
    <property type="term" value="F:copper ion binding"/>
    <property type="evidence" value="ECO:0000250"/>
    <property type="project" value="UniProtKB"/>
</dbReference>
<dbReference type="GO" id="GO:0003677">
    <property type="term" value="F:DNA binding"/>
    <property type="evidence" value="ECO:0000250"/>
    <property type="project" value="UniProtKB"/>
</dbReference>
<dbReference type="GO" id="GO:0000981">
    <property type="term" value="F:DNA-binding transcription factor activity, RNA polymerase II-specific"/>
    <property type="evidence" value="ECO:0000250"/>
    <property type="project" value="UniProtKB"/>
</dbReference>
<dbReference type="GO" id="GO:0140693">
    <property type="term" value="F:molecular condensate scaffold activity"/>
    <property type="evidence" value="ECO:0000250"/>
    <property type="project" value="UniProtKB"/>
</dbReference>
<dbReference type="GO" id="GO:1990841">
    <property type="term" value="F:promoter-specific chromatin binding"/>
    <property type="evidence" value="ECO:0000250"/>
    <property type="project" value="UniProtKB"/>
</dbReference>
<dbReference type="GO" id="GO:0000978">
    <property type="term" value="F:RNA polymerase II cis-regulatory region sequence-specific DNA binding"/>
    <property type="evidence" value="ECO:0000250"/>
    <property type="project" value="UniProtKB"/>
</dbReference>
<dbReference type="GO" id="GO:0090398">
    <property type="term" value="P:cellular senescence"/>
    <property type="evidence" value="ECO:0000250"/>
    <property type="project" value="UniProtKB"/>
</dbReference>
<dbReference type="GO" id="GO:0048512">
    <property type="term" value="P:circadian behavior"/>
    <property type="evidence" value="ECO:0000250"/>
    <property type="project" value="UniProtKB"/>
</dbReference>
<dbReference type="GO" id="GO:0006974">
    <property type="term" value="P:DNA damage response"/>
    <property type="evidence" value="ECO:0000250"/>
    <property type="project" value="UniProtKB"/>
</dbReference>
<dbReference type="GO" id="GO:0043153">
    <property type="term" value="P:entrainment of circadian clock by photoperiod"/>
    <property type="evidence" value="ECO:0000250"/>
    <property type="project" value="UniProtKB"/>
</dbReference>
<dbReference type="GO" id="GO:0030308">
    <property type="term" value="P:negative regulation of cell growth"/>
    <property type="evidence" value="ECO:0000250"/>
    <property type="project" value="UniProtKB"/>
</dbReference>
<dbReference type="GO" id="GO:0045892">
    <property type="term" value="P:negative regulation of DNA-templated transcription"/>
    <property type="evidence" value="ECO:0000250"/>
    <property type="project" value="UniProtKB"/>
</dbReference>
<dbReference type="GO" id="GO:0006289">
    <property type="term" value="P:nucleotide-excision repair"/>
    <property type="evidence" value="ECO:0000250"/>
    <property type="project" value="UniProtKB"/>
</dbReference>
<dbReference type="GO" id="GO:0097252">
    <property type="term" value="P:oligodendrocyte apoptotic process"/>
    <property type="evidence" value="ECO:0000250"/>
    <property type="project" value="UniProtKB"/>
</dbReference>
<dbReference type="GO" id="GO:0043065">
    <property type="term" value="P:positive regulation of apoptotic process"/>
    <property type="evidence" value="ECO:0000250"/>
    <property type="project" value="UniProtKB"/>
</dbReference>
<dbReference type="GO" id="GO:2001244">
    <property type="term" value="P:positive regulation of intrinsic apoptotic signaling pathway"/>
    <property type="evidence" value="ECO:0000250"/>
    <property type="project" value="UniProtKB"/>
</dbReference>
<dbReference type="GO" id="GO:0045944">
    <property type="term" value="P:positive regulation of transcription by RNA polymerase II"/>
    <property type="evidence" value="ECO:0000250"/>
    <property type="project" value="UniProtKB"/>
</dbReference>
<dbReference type="GO" id="GO:0051262">
    <property type="term" value="P:protein tetramerization"/>
    <property type="evidence" value="ECO:0007669"/>
    <property type="project" value="InterPro"/>
</dbReference>
<dbReference type="CDD" id="cd08367">
    <property type="entry name" value="P53"/>
    <property type="match status" value="1"/>
</dbReference>
<dbReference type="FunFam" id="2.60.40.720:FF:000003">
    <property type="entry name" value="Cellular tumor antigen p53"/>
    <property type="match status" value="1"/>
</dbReference>
<dbReference type="FunFam" id="4.10.170.10:FF:000003">
    <property type="entry name" value="Cellular tumor antigen p53"/>
    <property type="match status" value="1"/>
</dbReference>
<dbReference type="Gene3D" id="2.60.40.720">
    <property type="match status" value="1"/>
</dbReference>
<dbReference type="Gene3D" id="6.10.50.20">
    <property type="match status" value="1"/>
</dbReference>
<dbReference type="Gene3D" id="4.10.170.10">
    <property type="entry name" value="p53-like tetramerisation domain"/>
    <property type="match status" value="1"/>
</dbReference>
<dbReference type="InterPro" id="IPR008967">
    <property type="entry name" value="p53-like_TF_DNA-bd_sf"/>
</dbReference>
<dbReference type="InterPro" id="IPR012346">
    <property type="entry name" value="p53/RUNT-type_TF_DNA-bd_sf"/>
</dbReference>
<dbReference type="InterPro" id="IPR011615">
    <property type="entry name" value="p53_DNA-bd"/>
</dbReference>
<dbReference type="InterPro" id="IPR036674">
    <property type="entry name" value="p53_tetramer_sf"/>
</dbReference>
<dbReference type="InterPro" id="IPR010991">
    <property type="entry name" value="p53_tetrameristn"/>
</dbReference>
<dbReference type="InterPro" id="IPR013872">
    <property type="entry name" value="p53_transactivation_domain"/>
</dbReference>
<dbReference type="InterPro" id="IPR002117">
    <property type="entry name" value="p53_tumour_suppressor"/>
</dbReference>
<dbReference type="PANTHER" id="PTHR11447">
    <property type="entry name" value="CELLULAR TUMOR ANTIGEN P53"/>
    <property type="match status" value="1"/>
</dbReference>
<dbReference type="PANTHER" id="PTHR11447:SF6">
    <property type="entry name" value="CELLULAR TUMOR ANTIGEN P53"/>
    <property type="match status" value="1"/>
</dbReference>
<dbReference type="Pfam" id="PF00870">
    <property type="entry name" value="P53"/>
    <property type="match status" value="1"/>
</dbReference>
<dbReference type="Pfam" id="PF08563">
    <property type="entry name" value="P53_TAD"/>
    <property type="match status" value="1"/>
</dbReference>
<dbReference type="Pfam" id="PF07710">
    <property type="entry name" value="P53_tetramer"/>
    <property type="match status" value="1"/>
</dbReference>
<dbReference type="PRINTS" id="PR00386">
    <property type="entry name" value="P53SUPPRESSR"/>
</dbReference>
<dbReference type="SUPFAM" id="SSF47719">
    <property type="entry name" value="p53 tetramerization domain"/>
    <property type="match status" value="1"/>
</dbReference>
<dbReference type="SUPFAM" id="SSF49417">
    <property type="entry name" value="p53-like transcription factors"/>
    <property type="match status" value="1"/>
</dbReference>
<dbReference type="PROSITE" id="PS00348">
    <property type="entry name" value="P53"/>
    <property type="match status" value="1"/>
</dbReference>
<feature type="chain" id="PRO_0000185711" description="Cellular tumor antigen p53">
    <location>
        <begin position="1"/>
        <end position="391"/>
    </location>
</feature>
<feature type="DNA-binding region" evidence="3">
    <location>
        <begin position="99"/>
        <end position="289"/>
    </location>
</feature>
<feature type="region of interest" description="Interaction with CCAR2" evidence="3">
    <location>
        <begin position="1"/>
        <end position="318"/>
    </location>
</feature>
<feature type="region of interest" description="Transcription activation (acidic)">
    <location>
        <begin position="1"/>
        <end position="43"/>
    </location>
</feature>
<feature type="region of interest" description="Disordered" evidence="5">
    <location>
        <begin position="60"/>
        <end position="92"/>
    </location>
</feature>
<feature type="region of interest" description="Interaction with WWOX" evidence="1">
    <location>
        <begin position="63"/>
        <end position="107"/>
    </location>
</feature>
<feature type="region of interest" description="Interaction with HIPK1" evidence="1">
    <location>
        <begin position="97"/>
        <end position="368"/>
    </location>
</feature>
<feature type="region of interest" description="Required for interaction with ZNF385A" evidence="1">
    <location>
        <begin position="97"/>
        <end position="297"/>
    </location>
</feature>
<feature type="region of interest" description="Required for interaction with FBXO42" evidence="1">
    <location>
        <begin position="110"/>
        <end position="233"/>
    </location>
</feature>
<feature type="region of interest" description="Interaction with AXIN1" evidence="1">
    <location>
        <begin position="113"/>
        <end position="289"/>
    </location>
</feature>
<feature type="region of interest" description="Interaction with E4F1" evidence="1">
    <location>
        <begin position="253"/>
        <end position="291"/>
    </location>
</feature>
<feature type="region of interest" description="Interaction with DNA" evidence="1">
    <location>
        <begin position="270"/>
        <end position="277"/>
    </location>
</feature>
<feature type="region of interest" description="Disordered" evidence="5">
    <location>
        <begin position="280"/>
        <end position="319"/>
    </location>
</feature>
<feature type="region of interest" description="Interaction with HIPK2" evidence="1">
    <location>
        <begin position="317"/>
        <end position="358"/>
    </location>
</feature>
<feature type="region of interest" description="Oligomerization">
    <location>
        <begin position="323"/>
        <end position="354"/>
    </location>
</feature>
<feature type="region of interest" description="Disordered" evidence="5">
    <location>
        <begin position="349"/>
        <end position="391"/>
    </location>
</feature>
<feature type="region of interest" description="Interaction with USP7" evidence="1">
    <location>
        <begin position="357"/>
        <end position="361"/>
    </location>
</feature>
<feature type="region of interest" description="Basic (repression of DNA-binding)">
    <location>
        <begin position="366"/>
        <end position="385"/>
    </location>
</feature>
<feature type="short sequence motif" description="Bipartite nuclear localization signal" evidence="1">
    <location>
        <begin position="302"/>
        <end position="319"/>
    </location>
</feature>
<feature type="short sequence motif" description="Nuclear export signal" evidence="1">
    <location>
        <begin position="337"/>
        <end position="348"/>
    </location>
</feature>
<feature type="short sequence motif" description="[KR]-[STA]-K motif">
    <location>
        <begin position="368"/>
        <end position="370"/>
    </location>
</feature>
<feature type="compositionally biased region" description="Pro residues" evidence="5">
    <location>
        <begin position="66"/>
        <end position="75"/>
    </location>
</feature>
<feature type="compositionally biased region" description="Low complexity" evidence="5">
    <location>
        <begin position="76"/>
        <end position="85"/>
    </location>
</feature>
<feature type="compositionally biased region" description="Basic and acidic residues" evidence="5">
    <location>
        <begin position="280"/>
        <end position="292"/>
    </location>
</feature>
<feature type="compositionally biased region" description="Polar residues" evidence="5">
    <location>
        <begin position="306"/>
        <end position="315"/>
    </location>
</feature>
<feature type="compositionally biased region" description="Basic and acidic residues" evidence="5">
    <location>
        <begin position="349"/>
        <end position="358"/>
    </location>
</feature>
<feature type="compositionally biased region" description="Basic residues" evidence="5">
    <location>
        <begin position="368"/>
        <end position="382"/>
    </location>
</feature>
<feature type="binding site" evidence="3">
    <location>
        <position position="173"/>
    </location>
    <ligand>
        <name>Zn(2+)</name>
        <dbReference type="ChEBI" id="CHEBI:29105"/>
    </ligand>
</feature>
<feature type="binding site" evidence="3">
    <location>
        <position position="176"/>
    </location>
    <ligand>
        <name>Zn(2+)</name>
        <dbReference type="ChEBI" id="CHEBI:29105"/>
    </ligand>
</feature>
<feature type="binding site" evidence="3">
    <location>
        <position position="235"/>
    </location>
    <ligand>
        <name>Zn(2+)</name>
        <dbReference type="ChEBI" id="CHEBI:29105"/>
    </ligand>
</feature>
<feature type="binding site" evidence="3">
    <location>
        <position position="239"/>
    </location>
    <ligand>
        <name>Zn(2+)</name>
        <dbReference type="ChEBI" id="CHEBI:29105"/>
    </ligand>
</feature>
<feature type="site" description="Interaction with DNA" evidence="3">
    <location>
        <position position="117"/>
    </location>
</feature>
<feature type="modified residue" description="Phosphoserine; by HIPK4" evidence="3">
    <location>
        <position position="9"/>
    </location>
</feature>
<feature type="modified residue" description="Phosphoserine; by CDK5, PRPK, AMPK, NUAK1 and ATM" evidence="3">
    <location>
        <position position="15"/>
    </location>
</feature>
<feature type="modified residue" description="Phosphothreonine; by CK1, VRK1 and VRK2" evidence="3">
    <location>
        <position position="18"/>
    </location>
</feature>
<feature type="modified residue" description="Phosphoserine; by CHEK2, CK1 and PLK3" evidence="3">
    <location>
        <position position="20"/>
    </location>
</feature>
<feature type="modified residue" description="N6-acetyllysine" evidence="3">
    <location>
        <position position="117"/>
    </location>
</feature>
<feature type="modified residue" description="N6-lactoyllysine" evidence="3">
    <location>
        <position position="117"/>
    </location>
</feature>
<feature type="modified residue" description="N6-lactoyllysine" evidence="3">
    <location>
        <position position="136"/>
    </location>
</feature>
<feature type="modified residue" description="Phosphoserine; by AURKB" evidence="3">
    <location>
        <position position="180"/>
    </location>
</feature>
<feature type="modified residue" description="Phosphoserine; by AURKB" evidence="3">
    <location>
        <position position="266"/>
    </location>
</feature>
<feature type="modified residue" description="Phosphothreonine; by AURKB" evidence="3">
    <location>
        <position position="281"/>
    </location>
</feature>
<feature type="modified residue" description="N6-acetyllysine" evidence="3">
    <location>
        <position position="302"/>
    </location>
</feature>
<feature type="modified residue" description="Phosphoserine; by AURKA, CDK1 and CDK2" evidence="3">
    <location>
        <position position="313"/>
    </location>
</feature>
<feature type="modified residue" description="N6-acetyllysine" evidence="2">
    <location>
        <position position="319"/>
    </location>
</feature>
<feature type="modified residue" description="Omega-N-methylarginine" evidence="3">
    <location>
        <position position="331"/>
    </location>
</feature>
<feature type="modified residue" description="Symmetric dimethylarginine" evidence="3">
    <location>
        <position position="333"/>
    </location>
</feature>
<feature type="modified residue" description="Symmetric dimethylarginine" evidence="3">
    <location>
        <position position="335"/>
    </location>
</feature>
<feature type="modified residue" description="N6,N6-dimethyllysine; alternate" evidence="3">
    <location>
        <position position="368"/>
    </location>
</feature>
<feature type="modified residue" description="N6-methyllysine; by SMYD2; alternate" evidence="3">
    <location>
        <position position="368"/>
    </location>
</feature>
<feature type="modified residue" description="N6-methyllysine; by SETD7" evidence="3">
    <location>
        <position position="370"/>
    </location>
</feature>
<feature type="modified residue" description="N6,N6-dimethyllysine; by EHMT1 and EHMT2; alternate" evidence="3">
    <location>
        <position position="371"/>
    </location>
</feature>
<feature type="modified residue" description="N6-acetyllysine; alternate" evidence="3">
    <location>
        <position position="371"/>
    </location>
</feature>
<feature type="modified residue" description="N6-acetyllysine" evidence="3">
    <location>
        <position position="379"/>
    </location>
</feature>
<feature type="modified residue" description="N6,N6-dimethyllysine; alternate" evidence="3">
    <location>
        <position position="380"/>
    </location>
</feature>
<feature type="modified residue" description="N6-acetyllysine; alternate" evidence="3">
    <location>
        <position position="380"/>
    </location>
</feature>
<feature type="modified residue" description="N6-methyllysine; by KMT5A; alternate" evidence="3">
    <location>
        <position position="380"/>
    </location>
</feature>
<feature type="modified residue" description="Phosphoserine; by CK2, CDK2 and NUAK1" evidence="3">
    <location>
        <position position="390"/>
    </location>
</feature>
<feature type="cross-link" description="Glycyl lysine isopeptide (Lys-Gly) (interchain with G-Cter in ubiquitin)" evidence="3">
    <location>
        <position position="24"/>
    </location>
</feature>
<feature type="cross-link" description="Glycyl lysine isopeptide (Lys-Gly) (interchain with G-Cter in ubiquitin)" evidence="3">
    <location>
        <position position="288"/>
    </location>
</feature>
<feature type="cross-link" description="Glycyl lysine isopeptide (Lys-Gly) (interchain with G-Cter in ubiquitin)" evidence="3">
    <location>
        <position position="289"/>
    </location>
</feature>
<feature type="cross-link" description="Glycyl lysine isopeptide (Lys-Gly) (interchain with G-Cter in ubiquitin)" evidence="3">
    <location>
        <position position="349"/>
    </location>
</feature>
<feature type="cross-link" description="Glycyl lysine isopeptide (Lys-Gly) (interchain with G-Cter in ubiquitin)" evidence="3">
    <location>
        <position position="355"/>
    </location>
</feature>
<feature type="cross-link" description="Glycyl lysine isopeptide (Lys-Gly) (interchain with G-Cter in SUMO)" evidence="1">
    <location>
        <position position="384"/>
    </location>
</feature>
<proteinExistence type="evidence at transcript level"/>
<name>P53_RABIT</name>
<evidence type="ECO:0000250" key="1"/>
<evidence type="ECO:0000250" key="2">
    <source>
        <dbReference type="UniProtKB" id="P02340"/>
    </source>
</evidence>
<evidence type="ECO:0000250" key="3">
    <source>
        <dbReference type="UniProtKB" id="P04637"/>
    </source>
</evidence>
<evidence type="ECO:0000250" key="4">
    <source>
        <dbReference type="UniProtKB" id="P10361"/>
    </source>
</evidence>
<evidence type="ECO:0000256" key="5">
    <source>
        <dbReference type="SAM" id="MobiDB-lite"/>
    </source>
</evidence>
<evidence type="ECO:0000305" key="6"/>
<comment type="function">
    <text evidence="2 3">Multifunctional transcription factor that induces cell cycle arrest, DNA repair or apoptosis upon binding to its target DNA sequence. Acts as a tumor suppressor in many tumor types; induces growth arrest or apoptosis depending on the physiological circumstances and cell type. Negatively regulates cell division by controlling expression of a set of genes required for this process. One of the activated genes is an inhibitor of cyclin-dependent kinases. Apoptosis induction seems to be mediated either by stimulation of BAX and FAS antigen expression, or by repression of Bcl-2 expression. Its pro-apoptotic activity is activated via its interaction with PPP1R13B/ASPP1 or TP53BP2/ASPP2 (By similarity). However, this activity is inhibited when the interaction with PPP1R13B/ASPP1 or TP53BP2/ASPP2 is displaced by PPP1R13L/iASPP (By similarity). In cooperation with mitochondrial PPIF is involved in activating oxidative stress-induced necrosis; the function is largely independent of transcription. Prevents CDK7 kinase activity when associated to CAK complex in response to DNA damage, thus stopping cell cycle progression. Induces the transcription of long intergenic non-coding RNA p21 (lincRNA-p21) and lincRNA-Mkln1. LincRNA-p21 participates in TP53-dependent transcriptional repression leading to apoptosis and seems to have an effect on cell-cycle regulation. Regulates the circadian clock by repressing CLOCK-ARNTL/BMAL1-mediated transcriptional activation of PER2.</text>
</comment>
<comment type="cofactor">
    <cofactor evidence="1">
        <name>Zn(2+)</name>
        <dbReference type="ChEBI" id="CHEBI:29105"/>
    </cofactor>
    <text evidence="1">Binds 1 zinc ion per subunit.</text>
</comment>
<comment type="subunit">
    <text evidence="2 3 4">Forms homodimers and homotetramers (By similarity). Binds DNA as a homotetramer. Interacts with AXIN1. Probably part of a complex consisting of TP53, HIPK2 and AXIN1. Interacts with histone acetyltransferases EP300 and methyltransferases HRMT1L2 and CARM1, and recruits them to promoters. Interacts (via C-terminus) with TAF1; when TAF1 is part of the TFIID complex. Interacts with ING4; this interaction may be indirect. Found in a complex with CABLES1 and TP73. Interacts with HIPK1, HIPK2, and TP53INP1. Interacts with WWOX. Interacts with USP7 and SYVN1. Interacts with HSP90AB1. Interacts with CHD8; leading to recruit histone H1 and prevent transactivation activity. Interacts with ARMC10, BANP, CDKN2AIP, NUAK1, STK11/LKB1, UHRF2 and E4F1. Interacts with YWHAZ; the interaction enhances TP53 transcriptional activity. Phosphorylation of YWHAZ inhibits this interaction. Interacts (via DNA-binding domain) with MAML1 (via N-terminus). Interacts with MKRN1. Interacts with PML (via C-terminus). Interacts with MDM2; leading to ubiquitination and proteasomal degradation of TP53. Directly interacts with FBXO42; leading to ubiquitination and degradation of TP53. Interacts (phosphorylated at Ser-15 by ATM) with the phosphatase PP2A-PPP2R5C holoenzyme; regulates stress-induced TP53-dependent inhibition of cell proliferation. Interacts with PPP2R2A. Interacts with AURKA, DAXX, BRD7 and TRIM24. Interacts (when monomethylated at Lys-380) with L3MBTL1. Interacts with GRK5. Binds to the CAK complex (CDK7, cyclin H and MAT1) in response to DNA damage. Interacts with CDK5 in neurons. Interacts with AURKB, SETD2, UHRF2 and NOC2L. Interacts (via N-terminus) with PTK2/FAK1; this promotes ubiquitination by MDM2. Interacts with PTK2B/PYK2; this promotes ubiquitination by MDM2. Interacts with PRKCG. Interacts with PPIF; the association implicates preferentially tetrameric TP53, is induced by oxidative stress and is impaired by cyclosporin A (CsA). Interacts with SNAI1; the interaction induces SNAI1 degradation via MDM2-mediated ubiquitination and inhibits SNAI1-induced cell invasion. Interacts with UBC9. Interacts with ZNF385B; the interaction is direct. Interacts (via DNA-binding domain) with ZNF385A; the interaction is direct and enhances p53/TP53 transactivation functions on cell-cycle arrest target genes, resulting in growth arrest. Interacts with ANKRD2. Interacts with RFFL and RNF34; involved in p53/TP53 ubiquitination. Interacts with MTA1 and COP1. Interacts with CCAR2 (via N-terminus). Interacts with MORC3. Interacts (via C-terminus) with POU4F2 (via C-terminus). Interacts (via oligomerization region) with NOP53; the interaction is direct and may prevent the MDM2-mediated proteasomal degradation of TP53. Interacts with AFG1L; mediates mitochondrial translocation of TP53. Interacts with UBD. Interacts with TAF6. Interacts with C10orf90/FATS; the interaction inhibits binding of TP53 and MDM2 (By similarity). Interacts with NUPR1; interaction is stress-dependent. Forms a complex with EP300 and NUPR1; this complex binds CDKN1A promoter leading to transcriptional induction of CDKN1A (By similarity). Interacts with PRMT5 in response to DNA damage; the interaction is TTC5/STRAP dependent (By similarity). Interacts with PPP1R13L (via SH3 domain and ANK repeats); the interaction inhibits pro-apoptotic activity of p53/TP53 (By similarity). Interacts with PPP1R13B/ASPP1 and TP53BP2/ASPP2; the interactions promotes pro-apoptotic activity (By similarity). When phosphorylated at Ser-15, interacts with DDX3X and gamma-tubulin (By similarity). Interacts with KAT7/HBO1; leading to inhibit histone acetyltransferase activity of KAT7/HBO1 (By similarity). Interacts (via N-terminus) with E3 ubiquitin-protein ligase MUL1; the interaction results in ubiquitination of cytoplasmic TP53 at Lys-24 and subsequent proteasomal degradation (By similarity). Interacts with S100A4; this interaction promotes TP53 degradation (By similarity). Interacts with TTC5/STRAP; the interaction may result in increased mitochondrial-dependent apoptosis (By similarity). Interacts with NQO1; this interaction is NADH-dependent, stabilizes TP53 in response to oxidative stress and protects it from ubiquitin-independent degradation by the 20S proteasome (By similarity). Interacts with DAZAP2 at TP53 target gene promoters; the interaction is triggered by DNA damage and leads to modulation of the expression of a subset of TP53 target genes, reducing DNA damage-induced cell death by limiting the expression of cell death-mediating TP53 target genes (By similarity). Interacts (via N-terminus) with ZNF768 (via zinc-finger domains); interaction might be facilitated by TP53 oligomerization state (By similarity). Forms a ternary complex with ALDOB and G6PD; this interaction is direct. ALDOB stabilizes the complex inhibiting G6PD activity and keeping oxidative pentose phosphate metabolism in check. Interacts with MORN3; the interactions mediate post-transcriptional modifications of TP53 by MDM2 and SIRT1 (By similarity). Interacts with HSPA9/MOT-2; the interaction promotes the degradation of TP53 (By similarity). Interacts with FBXO22; this interaction promotes TP53 proteasomal degradation (By similarity).</text>
</comment>
<comment type="subcellular location">
    <subcellularLocation>
        <location evidence="3">Cytoplasm</location>
    </subcellularLocation>
    <subcellularLocation>
        <location evidence="3">Nucleus</location>
    </subcellularLocation>
    <subcellularLocation>
        <location evidence="3">Nucleus</location>
        <location evidence="3">PML body</location>
    </subcellularLocation>
    <subcellularLocation>
        <location evidence="3">Endoplasmic reticulum</location>
    </subcellularLocation>
    <subcellularLocation>
        <location evidence="3">Mitochondrion matrix</location>
    </subcellularLocation>
    <subcellularLocation>
        <location evidence="3">Cytoplasm</location>
        <location evidence="3">Cytoskeleton</location>
        <location evidence="3">Microtubule organizing center</location>
        <location evidence="3">Centrosome</location>
    </subcellularLocation>
    <text evidence="3">Interaction with BANP promotes nuclear localization. Recruited into PML bodies together with CHEK2. Translocates to mitochondria upon oxidative stress. Translocates to mitochondria in response to mitomycin C treatment (By similarity). Competitive inhibition of TP53 interaction with HSPA9/MOT-2 by UBXN2A results in increased protein abundance and subsequent translocation of TP53 to the nucleus (By similarity).</text>
</comment>
<comment type="domain">
    <text evidence="3">The N-terminal and C-terminal disordered regions undergo liquid-liquid phase separation (LLPS) following homotetramerization and activation. Post-translational modifications, such as phosphorylation or lactylation affect the ability to undergo LLPS.</text>
</comment>
<comment type="domain">
    <text evidence="3">The nuclear export signal acts as a transcriptional repression domain. The TADI and TADII motifs (residues 17 to 25 and 48 to 56) correspond both to 9aaTAD motifs which are transactivation domains present in a large number of yeast and animal transcription factors.</text>
</comment>
<comment type="PTM">
    <text evidence="1 3">Phosphorylation on Ser residues mediates transcriptional activation. Phosphorylation at Ser-9 by HIPK4 increases repression activity on BIRC5 promoter (By similarity). Phosphorylated on Thr-18 by VRK1, which may prevent the interaction with MDM2. Phosphorylated on Ser-20 by CHEK2 in response to DNA damage, which prevents ubiquitination by MDM2. Phosphorylated on Ser-20 by PLK3 in response to reactive oxygen species (ROS), promoting p53/TP53-mediated apoptosis. Probably phosphorylated on by CDK7 in a CAK complex in response to DNA damage. Phosphorylated by HIPK1. Phosphorylated on Ser-390 following UV but not gamma irradiation. Stabilized by CDK5-mediated phosphorylation in response to genotoxic and oxidative stresses at Ser-15, leading to accumulation of p53/TP53, particularly in the nucleus, thus inducing the transactivation of p53/TP53 target genes. Phosphorylated at Ser-313 and Ser-390 by CDK2 in response to DNA-damage (By similarity). Phosphorylation at Ser-15 is required for interaction with DDX3X and gamma-tubulin (By similarity). Phosphorylation at Ser-390 regulates its ability to undergo liquid-liquid phase separation by increasing fluidity of TP53/p53 condensates (By similarity).</text>
</comment>
<comment type="PTM">
    <text evidence="2 3">Ubiquitinated by MDM2 and SYVN1, which leads to proteasomal degradation. Ubiquitinated by RFWD3, which works in cooperation with MDM2 and may catalyze the formation of short polyubiquitin chains on p53/TP53 that are not targeted to the proteasome. Ubiquitinated by MKRN1, which leads to proteasomal degradation. Deubiquitinated by USP10, leading to stabilize it. Ubiquitinated by TRIM24, RFFL, RNF34 and RNF125, which leads to proteasomal degradation. Ubiquitination by TOPORS induces degradation. Deubiquitination by USP7, leading to stabilize it. Ubiquitinated by COP1, which leads to proteasomal degradation (By similarity). Ubiquitination and subsequent proteasomal degradation is negatively regulated by CCAR2 (By similarity). Polyubiquitinated by C10orf90/FATS, polyubiquitination is 'Lys-48'-linkage independent and non-proteolytic, leading to TP53 stabilization (By similarity). Deubiquitinated by USP3, leading to stabilization (By similarity). Ubiquitinated by MSL2, promoting its cytoplasmic localization (By similarity). Also ubiquitinated by the SCF(FBXO22)-KDMA4A complex; leading to proteasomal degradation (By similarity).</text>
</comment>
<comment type="PTM">
    <text evidence="3">Monomethylated at Lys-370 by SETD7, leading to stabilization and increased transcriptional activation. Monomethylated at Lys-368 by SMYD2, leading to decreased DNA-binding activity and subsequent transcriptional regulation activity. Lys-370 monomethylation prevents interaction with SMYD2 and subsequent monomethylation at Lys-368. Dimethylated at Lys-371 by EHMT1 and EHMT2. Monomethylated at Lys-380 by KMT5A, promoting interaction with L3MBTL1 and leading to repress transcriptional activity. Demethylation of dimethylated Lys-368 by KDM1A prevents interaction with TP53BP1 and represses TP53-mediated transcriptional activation (By similarity). Monomethylated at Arg-331 and dimethylated at Arg-333 and Arg-335 by PRMT5; methylation is increased after DNA damage and might possibly affect TP53 target gene specificity (By similarity). Polyubiquitinated by MUL1 at Lys-24 which leads to proteasomal degradation (By similarity).</text>
</comment>
<comment type="PTM">
    <text evidence="1">Sumoylated with SUMO1. Sumoylated at Lys-384 by UBC9 (By similarity).</text>
</comment>
<comment type="PTM">
    <text evidence="3">Acetylation of Lys-380 by CREBBP enhances transcriptional activity. Acetylation of Lys-380 by EP300. Deacetylation of Lys-380 by SIRT1 impairs its ability to induce proapoptotic program and modulate cell senescence. Deacetylation by SIRT2 impairs its ability to induce transcription activation in a AKT-dependent manner. Acetylation at Lys-379 increases stability. Deacetylation at Lys-379 by SIRT6 decreases its stability, thereby regulating cell senescence. Acetylated at Lys-117 by KAT5, KAT6A and KAT8; regulating its ability to induce proapoptotic program.</text>
</comment>
<comment type="PTM">
    <text evidence="3">Lactylation by AARS1 prevents ability to undergo liquid-liquid phase separation (LLPS), thereby inhibiting transcription factor activity.</text>
</comment>
<comment type="disease">
    <text>p53 is found in increased amounts in a wide variety of transformed cells. p53 is frequently mutated or inactivated in many types of cancer.</text>
</comment>
<comment type="similarity">
    <text evidence="6">Belongs to the p53 family.</text>
</comment>
<organism>
    <name type="scientific">Oryctolagus cuniculus</name>
    <name type="common">Rabbit</name>
    <dbReference type="NCBI Taxonomy" id="9986"/>
    <lineage>
        <taxon>Eukaryota</taxon>
        <taxon>Metazoa</taxon>
        <taxon>Chordata</taxon>
        <taxon>Craniata</taxon>
        <taxon>Vertebrata</taxon>
        <taxon>Euteleostomi</taxon>
        <taxon>Mammalia</taxon>
        <taxon>Eutheria</taxon>
        <taxon>Euarchontoglires</taxon>
        <taxon>Glires</taxon>
        <taxon>Lagomorpha</taxon>
        <taxon>Leporidae</taxon>
        <taxon>Oryctolagus</taxon>
    </lineage>
</organism>
<keyword id="KW-0007">Acetylation</keyword>
<keyword id="KW-0010">Activator</keyword>
<keyword id="KW-0053">Apoptosis</keyword>
<keyword id="KW-0090">Biological rhythms</keyword>
<keyword id="KW-0131">Cell cycle</keyword>
<keyword id="KW-0963">Cytoplasm</keyword>
<keyword id="KW-0206">Cytoskeleton</keyword>
<keyword id="KW-0238">DNA-binding</keyword>
<keyword id="KW-0256">Endoplasmic reticulum</keyword>
<keyword id="KW-1017">Isopeptide bond</keyword>
<keyword id="KW-0479">Metal-binding</keyword>
<keyword id="KW-0488">Methylation</keyword>
<keyword id="KW-0496">Mitochondrion</keyword>
<keyword id="KW-1210">Necrosis</keyword>
<keyword id="KW-0539">Nucleus</keyword>
<keyword id="KW-0597">Phosphoprotein</keyword>
<keyword id="KW-1185">Reference proteome</keyword>
<keyword id="KW-0678">Repressor</keyword>
<keyword id="KW-0804">Transcription</keyword>
<keyword id="KW-0805">Transcription regulation</keyword>
<keyword id="KW-0043">Tumor suppressor</keyword>
<keyword id="KW-0832">Ubl conjugation</keyword>
<keyword id="KW-0862">Zinc</keyword>
<gene>
    <name type="primary">TP53</name>
</gene>
<sequence>MEESQSDLSLEPPLSQETFSDLWKLLPENNLLTTSLNPPVDDLLSAEDVANWLNEDPEEGLRVPAAPAPEAPAPAAPALAAPAPATSWPLSSSVPSQKTYHGNYGFRLGFLHSGTAKSVTCTYSPCLNKLFCQLAKTCPVQLWVDSTPPPGTRVRAMAIYKKSQHMTEVVRRCPHHERCSDSDGLAPPQHLIRVEGNLRAEYLDDRNTFRHSVVVPYEPPEVGSDCTTIHYNYMCNSSCMGGMNRRPILTIITLEDSSGNLLGRNSFEVRVCACPGRDRRTEEENFRKKGEPCPELPPGSSKRALPTTTTDSSPQTKKKPLDGEYFILKIRGRERFEMFRELNEALELKDAQAEKEPGGSRAHSSYLKAKKGQSTSRHKKPMFKREGPDSD</sequence>